<organism>
    <name type="scientific">Bartonella henselae (strain ATCC 49882 / DSM 28221 / CCUG 30454 / Houston 1)</name>
    <name type="common">Rochalimaea henselae</name>
    <dbReference type="NCBI Taxonomy" id="283166"/>
    <lineage>
        <taxon>Bacteria</taxon>
        <taxon>Pseudomonadati</taxon>
        <taxon>Pseudomonadota</taxon>
        <taxon>Alphaproteobacteria</taxon>
        <taxon>Hyphomicrobiales</taxon>
        <taxon>Bartonellaceae</taxon>
        <taxon>Bartonella</taxon>
    </lineage>
</organism>
<name>YBEY_BARHE</name>
<dbReference type="EC" id="3.1.-.-" evidence="1"/>
<dbReference type="EMBL" id="BX897699">
    <property type="protein sequence ID" value="CAF27036.1"/>
    <property type="molecule type" value="Genomic_DNA"/>
</dbReference>
<dbReference type="RefSeq" id="WP_011180175.1">
    <property type="nucleotide sequence ID" value="NZ_LRIJ02000001.1"/>
</dbReference>
<dbReference type="SMR" id="Q6G4V8"/>
<dbReference type="PaxDb" id="283166-BH02240"/>
<dbReference type="EnsemblBacteria" id="CAF27036">
    <property type="protein sequence ID" value="CAF27036"/>
    <property type="gene ID" value="BH02240"/>
</dbReference>
<dbReference type="GeneID" id="92984891"/>
<dbReference type="KEGG" id="bhe:BH02240"/>
<dbReference type="eggNOG" id="COG0319">
    <property type="taxonomic scope" value="Bacteria"/>
</dbReference>
<dbReference type="OrthoDB" id="9807740at2"/>
<dbReference type="Proteomes" id="UP000000421">
    <property type="component" value="Chromosome"/>
</dbReference>
<dbReference type="GO" id="GO:0005737">
    <property type="term" value="C:cytoplasm"/>
    <property type="evidence" value="ECO:0007669"/>
    <property type="project" value="UniProtKB-SubCell"/>
</dbReference>
<dbReference type="GO" id="GO:0004222">
    <property type="term" value="F:metalloendopeptidase activity"/>
    <property type="evidence" value="ECO:0007669"/>
    <property type="project" value="InterPro"/>
</dbReference>
<dbReference type="GO" id="GO:0004521">
    <property type="term" value="F:RNA endonuclease activity"/>
    <property type="evidence" value="ECO:0007669"/>
    <property type="project" value="UniProtKB-UniRule"/>
</dbReference>
<dbReference type="GO" id="GO:0008270">
    <property type="term" value="F:zinc ion binding"/>
    <property type="evidence" value="ECO:0007669"/>
    <property type="project" value="UniProtKB-UniRule"/>
</dbReference>
<dbReference type="GO" id="GO:0006364">
    <property type="term" value="P:rRNA processing"/>
    <property type="evidence" value="ECO:0007669"/>
    <property type="project" value="UniProtKB-UniRule"/>
</dbReference>
<dbReference type="Gene3D" id="3.40.390.30">
    <property type="entry name" value="Metalloproteases ('zincins'), catalytic domain"/>
    <property type="match status" value="1"/>
</dbReference>
<dbReference type="HAMAP" id="MF_00009">
    <property type="entry name" value="Endoribonucl_YbeY"/>
    <property type="match status" value="1"/>
</dbReference>
<dbReference type="InterPro" id="IPR023091">
    <property type="entry name" value="MetalPrtase_cat_dom_sf_prd"/>
</dbReference>
<dbReference type="InterPro" id="IPR002036">
    <property type="entry name" value="YbeY"/>
</dbReference>
<dbReference type="InterPro" id="IPR020549">
    <property type="entry name" value="YbeY_CS"/>
</dbReference>
<dbReference type="NCBIfam" id="TIGR00043">
    <property type="entry name" value="rRNA maturation RNase YbeY"/>
    <property type="match status" value="1"/>
</dbReference>
<dbReference type="PANTHER" id="PTHR46986">
    <property type="entry name" value="ENDORIBONUCLEASE YBEY, CHLOROPLASTIC"/>
    <property type="match status" value="1"/>
</dbReference>
<dbReference type="PANTHER" id="PTHR46986:SF1">
    <property type="entry name" value="ENDORIBONUCLEASE YBEY, CHLOROPLASTIC"/>
    <property type="match status" value="1"/>
</dbReference>
<dbReference type="Pfam" id="PF02130">
    <property type="entry name" value="YbeY"/>
    <property type="match status" value="1"/>
</dbReference>
<dbReference type="SUPFAM" id="SSF55486">
    <property type="entry name" value="Metalloproteases ('zincins'), catalytic domain"/>
    <property type="match status" value="1"/>
</dbReference>
<dbReference type="PROSITE" id="PS01306">
    <property type="entry name" value="UPF0054"/>
    <property type="match status" value="1"/>
</dbReference>
<comment type="function">
    <text evidence="1">Single strand-specific metallo-endoribonuclease involved in late-stage 70S ribosome quality control and in maturation of the 3' terminus of the 16S rRNA.</text>
</comment>
<comment type="cofactor">
    <cofactor evidence="1">
        <name>Zn(2+)</name>
        <dbReference type="ChEBI" id="CHEBI:29105"/>
    </cofactor>
    <text evidence="1">Binds 1 zinc ion.</text>
</comment>
<comment type="subcellular location">
    <subcellularLocation>
        <location evidence="1">Cytoplasm</location>
    </subcellularLocation>
</comment>
<comment type="similarity">
    <text evidence="1">Belongs to the endoribonuclease YbeY family.</text>
</comment>
<gene>
    <name evidence="1" type="primary">ybeY</name>
    <name type="ordered locus">BH02240</name>
</gene>
<sequence>MITIDILVESDGWNDEKMLYNITEKALKTIMHHLSLENVVSEISLLFTDDKHMAQINAQWRGKNKSTNVLSFPAFPLKVGDSPGPMLGDIIIARETVVLEAENEAKSFQDHLTHMIVHGILHLLGYNHETNEEASHMEELERKILQKLSIKDPYAELS</sequence>
<keyword id="KW-0963">Cytoplasm</keyword>
<keyword id="KW-0255">Endonuclease</keyword>
<keyword id="KW-0378">Hydrolase</keyword>
<keyword id="KW-0479">Metal-binding</keyword>
<keyword id="KW-0540">Nuclease</keyword>
<keyword id="KW-0690">Ribosome biogenesis</keyword>
<keyword id="KW-0698">rRNA processing</keyword>
<keyword id="KW-0862">Zinc</keyword>
<accession>Q6G4V8</accession>
<evidence type="ECO:0000255" key="1">
    <source>
        <dbReference type="HAMAP-Rule" id="MF_00009"/>
    </source>
</evidence>
<protein>
    <recommendedName>
        <fullName evidence="1">Endoribonuclease YbeY</fullName>
        <ecNumber evidence="1">3.1.-.-</ecNumber>
    </recommendedName>
</protein>
<reference key="1">
    <citation type="journal article" date="2004" name="Proc. Natl. Acad. Sci. U.S.A.">
        <title>The louse-borne human pathogen Bartonella quintana is a genomic derivative of the zoonotic agent Bartonella henselae.</title>
        <authorList>
            <person name="Alsmark U.C.M."/>
            <person name="Frank A.C."/>
            <person name="Karlberg E.O."/>
            <person name="Legault B.-A."/>
            <person name="Ardell D.H."/>
            <person name="Canbaeck B."/>
            <person name="Eriksson A.-S."/>
            <person name="Naeslund A.K."/>
            <person name="Handley S.A."/>
            <person name="Huvet M."/>
            <person name="La Scola B."/>
            <person name="Holmberg M."/>
            <person name="Andersson S.G.E."/>
        </authorList>
    </citation>
    <scope>NUCLEOTIDE SEQUENCE [LARGE SCALE GENOMIC DNA]</scope>
    <source>
        <strain>ATCC 49882 / DSM 28221 / CCUG 30454 / Houston 1</strain>
    </source>
</reference>
<proteinExistence type="inferred from homology"/>
<feature type="chain" id="PRO_0000102413" description="Endoribonuclease YbeY">
    <location>
        <begin position="1"/>
        <end position="158"/>
    </location>
</feature>
<feature type="binding site" evidence="1">
    <location>
        <position position="118"/>
    </location>
    <ligand>
        <name>Zn(2+)</name>
        <dbReference type="ChEBI" id="CHEBI:29105"/>
        <note>catalytic</note>
    </ligand>
</feature>
<feature type="binding site" evidence="1">
    <location>
        <position position="122"/>
    </location>
    <ligand>
        <name>Zn(2+)</name>
        <dbReference type="ChEBI" id="CHEBI:29105"/>
        <note>catalytic</note>
    </ligand>
</feature>
<feature type="binding site" evidence="1">
    <location>
        <position position="128"/>
    </location>
    <ligand>
        <name>Zn(2+)</name>
        <dbReference type="ChEBI" id="CHEBI:29105"/>
        <note>catalytic</note>
    </ligand>
</feature>